<sequence length="2752" mass="325017">MVFEKENKTCMKDVRYDLQEREKEEEEKKRNYNISNNNNNNNYNKYDKNYISHVADYINRKQINNMNDNNMNKSCIMKRFNKKDVKYNDMLLKADETYINDGQIKKKYNNNNNNNNNNTKSIYLTNTYNKSSSIHNKPHIHKNNDINNIHEKNDKSNNDYNYSHNNISFDYNVEPVYNYINEGHNPDISLNKMEIQKGTYNNYCYENFIVNDDVDSYRDTHENNIMLLDDENNNSIFIKKNKSSFYHTSQHNNQGFINTNDTIKRNKNFVLQKNDINLTNDKINSSFNKKKNKLTSIYVEREDQKVGPLNVNNDMSILNKKKESKHNFYKSMNEHDVIAEKKKNTILKNKCVEDDNIRTIENVHNDSLKNEHMNDIYMKDNNNNINTYKIVHDKPLSAVENLQEVNKKKNYKNVIFKHLFNNDKDDNVYNLKKNKNNDVVEFNMNKKMTLISGNKMYKNETAKMYNSNQEIYISNNNNDNNNDNNNDNNINNYHHGYKKYNTTNQYNNNNNNNNNSNIYPFYKNTSINNCNNKKINEYDNNLFNNKKDILNNTNFVKSQDYHDNKNIQYNINSNDNYYHSFGDIKNEGNMNTMFNVKKKYKKVRINSHISSKLNDKSIINYRNGVINNQFNHMNDIVSSNNNNNNNNNNNNNNNNNNNNNNNNNNNNNNNNNNNINMKTSICNNKKRKNTKNFSLNLCSACLNIDDKIYIKQIKEILDRDINLLNEDPRIINALKKSHISTSYLFNNLKSLGTFRKGGLTWAIYYNNNNKGVNNMIKIKNEANNRIVKDKLLNNMNCTNIMNDIKNINTLATNNGGGYNLNNVNNMSNIYNVVDAKNGNHMNNRKDMSINTDCFNYTNSIDEMDDINENNKKKDNFPFLNNSNIDSDNNYIELIKNNSFCNDKYIIEPIIENTWLKKVLLIIKKESLDIECFLFKIKYYFYKSVLFLYQEGIKSYLGDVANQMKIYINYNFWSAAEIAFILRQITSLCNIQIEVRVKGEIGCVIYLNEEPEWFQGFVDSHNLNDTFSKKDWYLLNNFAIKMMQYRKGDKKSEDMKEDTPTRGENLQRGQNLQRGDNLQRGDNLQRGDNLQRGDNLQNGDNLQNGDNLQRGDNLQNGENLQSGENLQSGENLQSGENLQTRENLQSGENLQTRENLQSDENHNNILYPYNNNGQYEDNYNNSYNNNNNECIFCSSSNKKLKSYMFNGGRYAFAAKLKEEIKHFHSKRLGDIIHLVQLAIHKGIFVYSQRILLPVSACEKSADDLYPKIRNLNYDICETLEEVLEIISLLVDHKTNGLVLAQLKQQFILQFKKELNSLHFGYKKLQNLLMAEPFNKYYKLYIPNNNLHRTHIQHKKYKTPDNCRIFQKENIHLKNHLDFIYNTEFFTELYVEDEYYDNEDTKQSIQPIYDNIISTSCNNHIQQQNGSLYMSNTTFRNDKEEIKKDIYLLNIRDSQNKRDIKQDNISKKKINNINSNNSNNSNSNSNSNNNNNNNYNSNNISDNKLELTYQNIHNLPSYIQKSIETIFEKNNKENDKSKWIEEEEEEKEECPLKEINKNIQHNKNYDYIINNNIFQNRGSNNIQSYDDRNQNKQIQFLNTLYHIDVELSPVNTKRYNKIKDIFTNMIKINKKCNDNIINNDDIIKNDHDEFINDDQHYNIWNVHFEKRTLLNRYKQDNTTGATNVVSPILNIYTLIKKYKIKKKKYESFFDDINNDVDIHVNNKTEQNKDNGHIENNNINNINNNINNINNNINNINNNINNINNNVNNYYYIDNGDGNNIHKGYINNYIIPEDNPIHNNFTYDNNKKNTTKQTLQLLHNTEINFIPDIDPIDVTNVNINRKNKMNKIYKTKNVINRHHTNKSMETFEPNNKLDSYEDRNIQFYNENCNRYMNADYKTGQSTLPILSGTTNNIRYKTGESTLPILSGTTNNTRYKTGESTLPILSGTTNNTRYKTERFFKAKNSNQENINQNEINYNNNDDDDDNNNNNNDDDDDDNNYYMLNNQYGDNIMTESNYISSHNNLPQEDIFNDEKKIIEMIEKTIDQDYINIEDKNDVKHDMIKKINKRKNNNIHNYNDNNNDNNNDNNNDNNNDNNNDNNNDKYFIFDKDINNNVDENNINNIHLKDNIKKKKEKNEYNNYKISSYNNNDGDNYGDNNNNLINNSIYYYDSSKNRSIKYGDEYEEEIYNTKNVINQKNYGNINNYDYNVIFTNIAQVNDENLYIPNSRSINIDINDTDNNNCVKNITYINNNSNPLESNNNGSTTTTTTTTSIKNNMKHYNVDINNLDDIKDIYMYNSNNNDSTNVERDNNNINIEHVGEKPFCYYTHNYNNNVSNINFNTFNPSLNLIMNNPKKNNDQNSIFKKEQYSSYEPVKNNDINIFYSNKYDNNSNYIYEQKIKKNENDVIYKNDDKIFSNLNKSEECVHSSNSFVNNLYIPYNNMKDKDNIMSPQNNIIYDEQINNINNFTLNNHNMNNGHNIGDEYSDESYEIRHINNINKKDNLMDENNILNNNNDNNNNNNDKSNLVLHNNNDKSNHFLHNNNNDSYNYDIYNHFHTYNNCNLYNDDKNELSKKGAVLNRYNEQEQNIPIEHEYNNISYPSLIKNNKNNSEKKYLDNLSINLKDEKNYHPEKKNFNNNLEKNNKIFTNDIEHISFNKKICKIKNIYSENKNNQFFKNNTNHLFNTNINLYEKKNYVDDEFSHHKDPIKFSSLIKNKQNNNNSFMNLLNDNQYVKINNQNTFNNPNKYHHMKNKINK</sequence>
<proteinExistence type="evidence at protein level"/>
<keyword id="KW-0477">Merozoite</keyword>
<keyword id="KW-1185">Reference proteome</keyword>
<keyword id="KW-0677">Repeat</keyword>
<feature type="chain" id="PRO_0000370736" description="Protein PFF0380w">
    <location>
        <begin position="1"/>
        <end position="2752"/>
    </location>
</feature>
<feature type="domain" description="HTH OST-type" evidence="1">
    <location>
        <begin position="1277"/>
        <end position="1354"/>
    </location>
</feature>
<feature type="region of interest" description="Disordered" evidence="2">
    <location>
        <begin position="20"/>
        <end position="44"/>
    </location>
</feature>
<feature type="region of interest" description="Disordered" evidence="2">
    <location>
        <begin position="139"/>
        <end position="160"/>
    </location>
</feature>
<feature type="region of interest" description="Disordered" evidence="2">
    <location>
        <begin position="634"/>
        <end position="678"/>
    </location>
</feature>
<feature type="region of interest" description="Disordered" evidence="2">
    <location>
        <begin position="1048"/>
        <end position="1130"/>
    </location>
</feature>
<feature type="region of interest" description="Disordered" evidence="2">
    <location>
        <begin position="1153"/>
        <end position="1172"/>
    </location>
</feature>
<feature type="region of interest" description="Disordered" evidence="2">
    <location>
        <begin position="1457"/>
        <end position="1499"/>
    </location>
</feature>
<feature type="region of interest" description="Disordered" evidence="2">
    <location>
        <begin position="1958"/>
        <end position="1999"/>
    </location>
</feature>
<feature type="region of interest" description="Disordered" evidence="2">
    <location>
        <begin position="2063"/>
        <end position="2099"/>
    </location>
</feature>
<feature type="region of interest" description="Disordered" evidence="2">
    <location>
        <begin position="2501"/>
        <end position="2537"/>
    </location>
</feature>
<feature type="compositionally biased region" description="Basic and acidic residues" evidence="2">
    <location>
        <begin position="20"/>
        <end position="30"/>
    </location>
</feature>
<feature type="compositionally biased region" description="Low complexity" evidence="2">
    <location>
        <begin position="32"/>
        <end position="44"/>
    </location>
</feature>
<feature type="compositionally biased region" description="Basic and acidic residues" evidence="2">
    <location>
        <begin position="142"/>
        <end position="157"/>
    </location>
</feature>
<feature type="compositionally biased region" description="Low complexity" evidence="2">
    <location>
        <begin position="640"/>
        <end position="674"/>
    </location>
</feature>
<feature type="compositionally biased region" description="Basic and acidic residues" evidence="2">
    <location>
        <begin position="1048"/>
        <end position="1060"/>
    </location>
</feature>
<feature type="compositionally biased region" description="Polar residues" evidence="2">
    <location>
        <begin position="1061"/>
        <end position="1075"/>
    </location>
</feature>
<feature type="compositionally biased region" description="Basic and acidic residues" evidence="2">
    <location>
        <begin position="1076"/>
        <end position="1090"/>
    </location>
</feature>
<feature type="compositionally biased region" description="Polar residues" evidence="2">
    <location>
        <begin position="1091"/>
        <end position="1130"/>
    </location>
</feature>
<feature type="compositionally biased region" description="Low complexity" evidence="2">
    <location>
        <begin position="1162"/>
        <end position="1172"/>
    </location>
</feature>
<feature type="compositionally biased region" description="Low complexity" evidence="2">
    <location>
        <begin position="1469"/>
        <end position="1499"/>
    </location>
</feature>
<feature type="compositionally biased region" description="Low complexity" evidence="2">
    <location>
        <begin position="1962"/>
        <end position="1975"/>
    </location>
</feature>
<feature type="compositionally biased region" description="Acidic residues" evidence="2">
    <location>
        <begin position="1976"/>
        <end position="1994"/>
    </location>
</feature>
<feature type="compositionally biased region" description="Low complexity" evidence="2">
    <location>
        <begin position="2068"/>
        <end position="2095"/>
    </location>
</feature>
<feature type="compositionally biased region" description="Low complexity" evidence="2">
    <location>
        <begin position="2501"/>
        <end position="2526"/>
    </location>
</feature>
<evidence type="ECO:0000255" key="1">
    <source>
        <dbReference type="PROSITE-ProRule" id="PRU00975"/>
    </source>
</evidence>
<evidence type="ECO:0000256" key="2">
    <source>
        <dbReference type="SAM" id="MobiDB-lite"/>
    </source>
</evidence>
<reference key="1">
    <citation type="journal article" date="2002" name="Nature">
        <title>Genome sequence of the human malaria parasite Plasmodium falciparum.</title>
        <authorList>
            <person name="Gardner M.J."/>
            <person name="Hall N."/>
            <person name="Fung E."/>
            <person name="White O."/>
            <person name="Berriman M."/>
            <person name="Hyman R.W."/>
            <person name="Carlton J.M."/>
            <person name="Pain A."/>
            <person name="Nelson K.E."/>
            <person name="Bowman S."/>
            <person name="Paulsen I.T."/>
            <person name="James K.D."/>
            <person name="Eisen J.A."/>
            <person name="Rutherford K.M."/>
            <person name="Salzberg S.L."/>
            <person name="Craig A."/>
            <person name="Kyes S."/>
            <person name="Chan M.-S."/>
            <person name="Nene V."/>
            <person name="Shallom S.J."/>
            <person name="Suh B."/>
            <person name="Peterson J."/>
            <person name="Angiuoli S."/>
            <person name="Pertea M."/>
            <person name="Allen J."/>
            <person name="Selengut J."/>
            <person name="Haft D."/>
            <person name="Mather M.W."/>
            <person name="Vaidya A.B."/>
            <person name="Martin D.M.A."/>
            <person name="Fairlamb A.H."/>
            <person name="Fraunholz M.J."/>
            <person name="Roos D.S."/>
            <person name="Ralph S.A."/>
            <person name="McFadden G.I."/>
            <person name="Cummings L.M."/>
            <person name="Subramanian G.M."/>
            <person name="Mungall C."/>
            <person name="Venter J.C."/>
            <person name="Carucci D.J."/>
            <person name="Hoffman S.L."/>
            <person name="Newbold C."/>
            <person name="Davis R.W."/>
            <person name="Fraser C.M."/>
            <person name="Barrell B.G."/>
        </authorList>
    </citation>
    <scope>NUCLEOTIDE SEQUENCE [LARGE SCALE GENOMIC DNA]</scope>
    <source>
        <strain>3D7</strain>
    </source>
</reference>
<reference key="2">
    <citation type="journal article" date="2002" name="Nature">
        <title>Sequence of Plasmodium falciparum chromosomes 1, 3-9 and 13.</title>
        <authorList>
            <person name="Hall N."/>
            <person name="Pain A."/>
            <person name="Berriman M."/>
            <person name="Churcher C.M."/>
            <person name="Harris B."/>
            <person name="Harris D."/>
            <person name="Mungall K.L."/>
            <person name="Bowman S."/>
            <person name="Atkin R."/>
            <person name="Baker S."/>
            <person name="Barron A."/>
            <person name="Brooks K."/>
            <person name="Buckee C.O."/>
            <person name="Burrows C."/>
            <person name="Cherevach I."/>
            <person name="Chillingworth C."/>
            <person name="Chillingworth T."/>
            <person name="Christodoulou Z."/>
            <person name="Clark L."/>
            <person name="Clark R."/>
            <person name="Corton C."/>
            <person name="Cronin A."/>
            <person name="Davies R.M."/>
            <person name="Davis P."/>
            <person name="Dear P."/>
            <person name="Dearden F."/>
            <person name="Doggett J."/>
            <person name="Feltwell T."/>
            <person name="Goble A."/>
            <person name="Goodhead I."/>
            <person name="Gwilliam R."/>
            <person name="Hamlin N."/>
            <person name="Hance Z."/>
            <person name="Harper D."/>
            <person name="Hauser H."/>
            <person name="Hornsby T."/>
            <person name="Holroyd S."/>
            <person name="Horrocks P."/>
            <person name="Humphray S."/>
            <person name="Jagels K."/>
            <person name="James K.D."/>
            <person name="Johnson D."/>
            <person name="Kerhornou A."/>
            <person name="Knights A."/>
            <person name="Konfortov B."/>
            <person name="Kyes S."/>
            <person name="Larke N."/>
            <person name="Lawson D."/>
            <person name="Lennard N."/>
            <person name="Line A."/>
            <person name="Maddison M."/>
            <person name="Mclean J."/>
            <person name="Mooney P."/>
            <person name="Moule S."/>
            <person name="Murphy L."/>
            <person name="Oliver K."/>
            <person name="Ormond D."/>
            <person name="Price C."/>
            <person name="Quail M.A."/>
            <person name="Rabbinowitsch E."/>
            <person name="Rajandream M.A."/>
            <person name="Rutter S."/>
            <person name="Rutherford K.M."/>
            <person name="Sanders M."/>
            <person name="Simmonds M."/>
            <person name="Seeger K."/>
            <person name="Sharp S."/>
            <person name="Smith R."/>
            <person name="Squares R."/>
            <person name="Squares S."/>
            <person name="Stevens K."/>
            <person name="Taylor K."/>
            <person name="Tivey A."/>
            <person name="Unwin L."/>
            <person name="Whitehead S."/>
            <person name="Woodward J.R."/>
            <person name="Sulston J.E."/>
            <person name="Craig A."/>
            <person name="Newbold C."/>
            <person name="Barrell B.G."/>
        </authorList>
    </citation>
    <scope>NUCLEOTIDE SEQUENCE [LARGE SCALE GENOMIC DNA]</scope>
    <source>
        <strain>3D7</strain>
    </source>
</reference>
<reference key="3">
    <citation type="journal article" date="2007" name="PLoS ONE">
        <title>Rapid identification of malaria vaccine candidates based on alpha-helical coiled coil protein motif.</title>
        <authorList>
            <person name="Villard V."/>
            <person name="Agak G.W."/>
            <person name="Frank G."/>
            <person name="Jafarshad A."/>
            <person name="Servis C."/>
            <person name="Nebie I."/>
            <person name="Sirima S.B."/>
            <person name="Felger I."/>
            <person name="Arevalo-Herrera M."/>
            <person name="Herrera S."/>
            <person name="Heitz F."/>
            <person name="Baecker V."/>
            <person name="Druilhe P."/>
            <person name="Kajava A.V."/>
            <person name="Corradin G."/>
        </authorList>
    </citation>
    <scope>SYNTHESIS OF 1734-1768</scope>
    <scope>POSSIBLE CANDIDATE MALARIA EPITOPE</scope>
</reference>
<protein>
    <recommendedName>
        <fullName>Protein PFF0380w</fullName>
    </recommendedName>
</protein>
<dbReference type="EMBL" id="AL844505">
    <property type="protein sequence ID" value="CAG25247.1"/>
    <property type="molecule type" value="Genomic_DNA"/>
</dbReference>
<dbReference type="RefSeq" id="XP_966067.1">
    <property type="nucleotide sequence ID" value="XM_960974.1"/>
</dbReference>
<dbReference type="SMR" id="C6KSS5"/>
<dbReference type="FunCoup" id="C6KSS5">
    <property type="interactions" value="19"/>
</dbReference>
<dbReference type="STRING" id="36329.C6KSS5"/>
<dbReference type="SwissPalm" id="C6KSS5"/>
<dbReference type="PaxDb" id="5833-PFF0380w"/>
<dbReference type="EnsemblProtists" id="CAG25247">
    <property type="protein sequence ID" value="CAG25247"/>
    <property type="gene ID" value="PF3D7_0607700"/>
</dbReference>
<dbReference type="KEGG" id="pfa:PF3D7_0607700"/>
<dbReference type="VEuPathDB" id="PlasmoDB:PF3D7_0607700"/>
<dbReference type="HOGENOM" id="CLU_227057_0_0_1"/>
<dbReference type="InParanoid" id="C6KSS5"/>
<dbReference type="OMA" id="NFNYEIC"/>
<dbReference type="OrthoDB" id="361803at2759"/>
<dbReference type="Proteomes" id="UP000001450">
    <property type="component" value="Chromosome 6"/>
</dbReference>
<dbReference type="CDD" id="cd08824">
    <property type="entry name" value="LOTUS"/>
    <property type="match status" value="1"/>
</dbReference>
<dbReference type="InterPro" id="IPR025605">
    <property type="entry name" value="OST-HTH/LOTUS_dom"/>
</dbReference>
<dbReference type="InterPro" id="IPR036465">
    <property type="entry name" value="vWFA_dom_sf"/>
</dbReference>
<dbReference type="SUPFAM" id="SSF53300">
    <property type="entry name" value="vWA-like"/>
    <property type="match status" value="1"/>
</dbReference>
<dbReference type="PROSITE" id="PS51644">
    <property type="entry name" value="HTH_OST"/>
    <property type="match status" value="1"/>
</dbReference>
<organism>
    <name type="scientific">Plasmodium falciparum (isolate 3D7)</name>
    <dbReference type="NCBI Taxonomy" id="36329"/>
    <lineage>
        <taxon>Eukaryota</taxon>
        <taxon>Sar</taxon>
        <taxon>Alveolata</taxon>
        <taxon>Apicomplexa</taxon>
        <taxon>Aconoidasida</taxon>
        <taxon>Haemosporida</taxon>
        <taxon>Plasmodiidae</taxon>
        <taxon>Plasmodium</taxon>
        <taxon>Plasmodium (Laverania)</taxon>
    </lineage>
</organism>
<gene>
    <name type="ORF">PFF0380w</name>
</gene>
<accession>C6KSS5</accession>
<comment type="biotechnology">
    <text>Possible candidate for an effective malaria vaccine as determined by epitope response in sera.</text>
</comment>
<name>LRR2_PLAF7</name>